<proteinExistence type="inferred from homology"/>
<geneLocation type="chloroplast"/>
<keyword id="KW-0007">Acetylation</keyword>
<keyword id="KW-0113">Calvin cycle</keyword>
<keyword id="KW-0120">Carbon dioxide fixation</keyword>
<keyword id="KW-0150">Chloroplast</keyword>
<keyword id="KW-1015">Disulfide bond</keyword>
<keyword id="KW-0456">Lyase</keyword>
<keyword id="KW-0460">Magnesium</keyword>
<keyword id="KW-0479">Metal-binding</keyword>
<keyword id="KW-0488">Methylation</keyword>
<keyword id="KW-0503">Monooxygenase</keyword>
<keyword id="KW-0560">Oxidoreductase</keyword>
<keyword id="KW-0601">Photorespiration</keyword>
<keyword id="KW-0602">Photosynthesis</keyword>
<keyword id="KW-0934">Plastid</keyword>
<protein>
    <recommendedName>
        <fullName evidence="1">Ribulose bisphosphate carboxylase large chain</fullName>
        <shortName evidence="1">RuBisCO large subunit</shortName>
        <ecNumber evidence="1">4.1.1.39</ecNumber>
    </recommendedName>
</protein>
<organism>
    <name type="scientific">Chloranthus spicatus</name>
    <name type="common">Chulantree</name>
    <name type="synonym">Nigrina spicata</name>
    <dbReference type="NCBI Taxonomy" id="13006"/>
    <lineage>
        <taxon>Eukaryota</taxon>
        <taxon>Viridiplantae</taxon>
        <taxon>Streptophyta</taxon>
        <taxon>Embryophyta</taxon>
        <taxon>Tracheophyta</taxon>
        <taxon>Spermatophyta</taxon>
        <taxon>Magnoliopsida</taxon>
        <taxon>Chloranthales</taxon>
        <taxon>Chloranthaceae</taxon>
        <taxon>Chloranthus</taxon>
    </lineage>
</organism>
<reference key="1">
    <citation type="journal article" date="2007" name="Mol. Phylogenet. Evol.">
        <title>Phylogenetic and evolutionary implications of complete chloroplast genome sequences of four early-diverging angiosperms: Buxus (Buxaceae), Chloranthus (Chloranthaceae), Dioscorea (Dioscoreaceae), and Illicium (Schisandraceae).</title>
        <authorList>
            <person name="Hansen D.R."/>
            <person name="Dastidar S.G."/>
            <person name="Cai Z."/>
            <person name="Penaflor C."/>
            <person name="Kuehl J.V."/>
            <person name="Boore J.L."/>
            <person name="Jansen R.K."/>
        </authorList>
    </citation>
    <scope>NUCLEOTIDE SEQUENCE [LARGE SCALE GENOMIC DNA]</scope>
</reference>
<name>RBL_CHLSC</name>
<evidence type="ECO:0000255" key="1">
    <source>
        <dbReference type="HAMAP-Rule" id="MF_01338"/>
    </source>
</evidence>
<accession>A6MMD0</accession>
<dbReference type="EC" id="4.1.1.39" evidence="1"/>
<dbReference type="EMBL" id="EF380352">
    <property type="protein sequence ID" value="ABQ43268.1"/>
    <property type="molecule type" value="Genomic_DNA"/>
</dbReference>
<dbReference type="RefSeq" id="YP_001294106.1">
    <property type="nucleotide sequence ID" value="NC_009598.1"/>
</dbReference>
<dbReference type="SMR" id="A6MMD0"/>
<dbReference type="GeneID" id="5236475"/>
<dbReference type="GO" id="GO:0009507">
    <property type="term" value="C:chloroplast"/>
    <property type="evidence" value="ECO:0007669"/>
    <property type="project" value="UniProtKB-SubCell"/>
</dbReference>
<dbReference type="GO" id="GO:0000287">
    <property type="term" value="F:magnesium ion binding"/>
    <property type="evidence" value="ECO:0007669"/>
    <property type="project" value="UniProtKB-UniRule"/>
</dbReference>
<dbReference type="GO" id="GO:0004497">
    <property type="term" value="F:monooxygenase activity"/>
    <property type="evidence" value="ECO:0007669"/>
    <property type="project" value="UniProtKB-KW"/>
</dbReference>
<dbReference type="GO" id="GO:0016984">
    <property type="term" value="F:ribulose-bisphosphate carboxylase activity"/>
    <property type="evidence" value="ECO:0007669"/>
    <property type="project" value="UniProtKB-UniRule"/>
</dbReference>
<dbReference type="GO" id="GO:0009853">
    <property type="term" value="P:photorespiration"/>
    <property type="evidence" value="ECO:0007669"/>
    <property type="project" value="UniProtKB-KW"/>
</dbReference>
<dbReference type="GO" id="GO:0019253">
    <property type="term" value="P:reductive pentose-phosphate cycle"/>
    <property type="evidence" value="ECO:0007669"/>
    <property type="project" value="UniProtKB-UniRule"/>
</dbReference>
<dbReference type="CDD" id="cd08212">
    <property type="entry name" value="RuBisCO_large_I"/>
    <property type="match status" value="1"/>
</dbReference>
<dbReference type="FunFam" id="3.20.20.110:FF:000001">
    <property type="entry name" value="Ribulose bisphosphate carboxylase large chain"/>
    <property type="match status" value="1"/>
</dbReference>
<dbReference type="FunFam" id="3.30.70.150:FF:000001">
    <property type="entry name" value="Ribulose bisphosphate carboxylase large chain"/>
    <property type="match status" value="1"/>
</dbReference>
<dbReference type="Gene3D" id="3.20.20.110">
    <property type="entry name" value="Ribulose bisphosphate carboxylase, large subunit, C-terminal domain"/>
    <property type="match status" value="1"/>
</dbReference>
<dbReference type="Gene3D" id="3.30.70.150">
    <property type="entry name" value="RuBisCO large subunit, N-terminal domain"/>
    <property type="match status" value="1"/>
</dbReference>
<dbReference type="HAMAP" id="MF_01338">
    <property type="entry name" value="RuBisCO_L_type1"/>
    <property type="match status" value="1"/>
</dbReference>
<dbReference type="InterPro" id="IPR033966">
    <property type="entry name" value="RuBisCO"/>
</dbReference>
<dbReference type="InterPro" id="IPR020878">
    <property type="entry name" value="RuBisCo_large_chain_AS"/>
</dbReference>
<dbReference type="InterPro" id="IPR000685">
    <property type="entry name" value="RuBisCO_lsu_C"/>
</dbReference>
<dbReference type="InterPro" id="IPR036376">
    <property type="entry name" value="RuBisCO_lsu_C_sf"/>
</dbReference>
<dbReference type="InterPro" id="IPR017443">
    <property type="entry name" value="RuBisCO_lsu_fd_N"/>
</dbReference>
<dbReference type="InterPro" id="IPR036422">
    <property type="entry name" value="RuBisCO_lsu_N_sf"/>
</dbReference>
<dbReference type="InterPro" id="IPR020888">
    <property type="entry name" value="RuBisCO_lsuI"/>
</dbReference>
<dbReference type="NCBIfam" id="NF003252">
    <property type="entry name" value="PRK04208.1"/>
    <property type="match status" value="1"/>
</dbReference>
<dbReference type="PANTHER" id="PTHR42704">
    <property type="entry name" value="RIBULOSE BISPHOSPHATE CARBOXYLASE"/>
    <property type="match status" value="1"/>
</dbReference>
<dbReference type="PANTHER" id="PTHR42704:SF19">
    <property type="entry name" value="RIBULOSE BISPHOSPHATE CARBOXYLASE LARGE CHAIN"/>
    <property type="match status" value="1"/>
</dbReference>
<dbReference type="Pfam" id="PF00016">
    <property type="entry name" value="RuBisCO_large"/>
    <property type="match status" value="1"/>
</dbReference>
<dbReference type="Pfam" id="PF02788">
    <property type="entry name" value="RuBisCO_large_N"/>
    <property type="match status" value="1"/>
</dbReference>
<dbReference type="SFLD" id="SFLDG01052">
    <property type="entry name" value="RuBisCO"/>
    <property type="match status" value="1"/>
</dbReference>
<dbReference type="SFLD" id="SFLDS00014">
    <property type="entry name" value="RuBisCO"/>
    <property type="match status" value="1"/>
</dbReference>
<dbReference type="SFLD" id="SFLDG00301">
    <property type="entry name" value="RuBisCO-like_proteins"/>
    <property type="match status" value="1"/>
</dbReference>
<dbReference type="SUPFAM" id="SSF51649">
    <property type="entry name" value="RuBisCo, C-terminal domain"/>
    <property type="match status" value="1"/>
</dbReference>
<dbReference type="SUPFAM" id="SSF54966">
    <property type="entry name" value="RuBisCO, large subunit, small (N-terminal) domain"/>
    <property type="match status" value="1"/>
</dbReference>
<dbReference type="PROSITE" id="PS00157">
    <property type="entry name" value="RUBISCO_LARGE"/>
    <property type="match status" value="1"/>
</dbReference>
<comment type="function">
    <text evidence="1">RuBisCO catalyzes two reactions: the carboxylation of D-ribulose 1,5-bisphosphate, the primary event in carbon dioxide fixation, as well as the oxidative fragmentation of the pentose substrate in the photorespiration process. Both reactions occur simultaneously and in competition at the same active site.</text>
</comment>
<comment type="catalytic activity">
    <reaction evidence="1">
        <text>2 (2R)-3-phosphoglycerate + 2 H(+) = D-ribulose 1,5-bisphosphate + CO2 + H2O</text>
        <dbReference type="Rhea" id="RHEA:23124"/>
        <dbReference type="ChEBI" id="CHEBI:15377"/>
        <dbReference type="ChEBI" id="CHEBI:15378"/>
        <dbReference type="ChEBI" id="CHEBI:16526"/>
        <dbReference type="ChEBI" id="CHEBI:57870"/>
        <dbReference type="ChEBI" id="CHEBI:58272"/>
        <dbReference type="EC" id="4.1.1.39"/>
    </reaction>
</comment>
<comment type="catalytic activity">
    <reaction evidence="1">
        <text>D-ribulose 1,5-bisphosphate + O2 = 2-phosphoglycolate + (2R)-3-phosphoglycerate + 2 H(+)</text>
        <dbReference type="Rhea" id="RHEA:36631"/>
        <dbReference type="ChEBI" id="CHEBI:15378"/>
        <dbReference type="ChEBI" id="CHEBI:15379"/>
        <dbReference type="ChEBI" id="CHEBI:57870"/>
        <dbReference type="ChEBI" id="CHEBI:58033"/>
        <dbReference type="ChEBI" id="CHEBI:58272"/>
    </reaction>
</comment>
<comment type="cofactor">
    <cofactor evidence="1">
        <name>Mg(2+)</name>
        <dbReference type="ChEBI" id="CHEBI:18420"/>
    </cofactor>
    <text evidence="1">Binds 1 Mg(2+) ion per subunit.</text>
</comment>
<comment type="subunit">
    <text evidence="1">Heterohexadecamer of 8 large chains and 8 small chains; disulfide-linked. The disulfide link is formed within the large subunit homodimers.</text>
</comment>
<comment type="subcellular location">
    <subcellularLocation>
        <location>Plastid</location>
        <location>Chloroplast</location>
    </subcellularLocation>
</comment>
<comment type="PTM">
    <text evidence="1">The disulfide bond which can form in the large chain dimeric partners within the hexadecamer appears to be associated with oxidative stress and protein turnover.</text>
</comment>
<comment type="miscellaneous">
    <text evidence="1">The basic functional RuBisCO is composed of a large chain homodimer in a 'head-to-tail' conformation. In form I RuBisCO this homodimer is arranged in a barrel-like tetramer with the small subunits forming a tetrameric 'cap' on each end of the 'barrel'.</text>
</comment>
<comment type="similarity">
    <text evidence="1">Belongs to the RuBisCO large chain family. Type I subfamily.</text>
</comment>
<gene>
    <name evidence="1" type="primary">rbcL</name>
</gene>
<feature type="propeptide" id="PRO_0000355762" evidence="1">
    <location>
        <begin position="1"/>
        <end position="2"/>
    </location>
</feature>
<feature type="chain" id="PRO_0000355763" description="Ribulose bisphosphate carboxylase large chain">
    <location>
        <begin position="3"/>
        <end position="475"/>
    </location>
</feature>
<feature type="active site" description="Proton acceptor" evidence="1">
    <location>
        <position position="175"/>
    </location>
</feature>
<feature type="active site" description="Proton acceptor" evidence="1">
    <location>
        <position position="294"/>
    </location>
</feature>
<feature type="binding site" description="in homodimeric partner" evidence="1">
    <location>
        <position position="123"/>
    </location>
    <ligand>
        <name>substrate</name>
    </ligand>
</feature>
<feature type="binding site" evidence="1">
    <location>
        <position position="173"/>
    </location>
    <ligand>
        <name>substrate</name>
    </ligand>
</feature>
<feature type="binding site" evidence="1">
    <location>
        <position position="177"/>
    </location>
    <ligand>
        <name>substrate</name>
    </ligand>
</feature>
<feature type="binding site" description="via carbamate group" evidence="1">
    <location>
        <position position="201"/>
    </location>
    <ligand>
        <name>Mg(2+)</name>
        <dbReference type="ChEBI" id="CHEBI:18420"/>
    </ligand>
</feature>
<feature type="binding site" evidence="1">
    <location>
        <position position="203"/>
    </location>
    <ligand>
        <name>Mg(2+)</name>
        <dbReference type="ChEBI" id="CHEBI:18420"/>
    </ligand>
</feature>
<feature type="binding site" evidence="1">
    <location>
        <position position="204"/>
    </location>
    <ligand>
        <name>Mg(2+)</name>
        <dbReference type="ChEBI" id="CHEBI:18420"/>
    </ligand>
</feature>
<feature type="binding site" evidence="1">
    <location>
        <position position="295"/>
    </location>
    <ligand>
        <name>substrate</name>
    </ligand>
</feature>
<feature type="binding site" evidence="1">
    <location>
        <position position="327"/>
    </location>
    <ligand>
        <name>substrate</name>
    </ligand>
</feature>
<feature type="binding site" evidence="1">
    <location>
        <position position="379"/>
    </location>
    <ligand>
        <name>substrate</name>
    </ligand>
</feature>
<feature type="site" description="Transition state stabilizer" evidence="1">
    <location>
        <position position="334"/>
    </location>
</feature>
<feature type="modified residue" description="N-acetylproline" evidence="1">
    <location>
        <position position="3"/>
    </location>
</feature>
<feature type="modified residue" description="N6,N6,N6-trimethyllysine" evidence="1">
    <location>
        <position position="14"/>
    </location>
</feature>
<feature type="modified residue" description="N6-carboxylysine" evidence="1">
    <location>
        <position position="201"/>
    </location>
</feature>
<feature type="disulfide bond" description="Interchain; in linked form" evidence="1">
    <location>
        <position position="247"/>
    </location>
</feature>
<sequence>MSPQTETKASVGFKAGVKEYKLNYYTPDYETKDTDILAAFRLTPQPGVPPEEAGAAVAAESSTGTWTTVWTDGLTSLDRYKGRCYHIEPVAGEENQYIAYVAYPLDLFEEGSVTNMFTSIVGNVFGFKALRALRLEDLRIPPAYTKTFQGPPHGIQVERDKLNKYGRPLLGCTIKPKLGLSAKNYGRAVYECLRGGLDFTKDDENVNSQPFMRWRDRFVFCAEALYKAQAETGEIKGHYLNATAGTCEEMIKRAVFARELGVPIVMHDYLTGGFTANTSLAHYCRDNGLLLHIHRAMHAVIDRQKNHGIHFRVLAKALRMSGGDHIHAGTVVGKLEGERDITLGFVDLLRDDFIEKDRSRGLYFTQDWVSLPGVLPVASGGIHVWHMPALTEIFGDDSVLQFGGGTLGHPWGNAPGAVANRVALEACVQARNEGRDLAREGNEVIREASKWSPELAAACEIWKEIKFEFEAMDTV</sequence>